<comment type="function">
    <text>Part of the electron transfer component of biphenyl dioxygenase, transfers electrons from ferredoxin (BphF) to NADH.</text>
</comment>
<comment type="catalytic activity">
    <reaction>
        <text>2 reduced [2Fe-2S]-[ferredoxin] + NAD(+) + H(+) = 2 oxidized [2Fe-2S]-[ferredoxin] + NADH</text>
        <dbReference type="Rhea" id="RHEA:16521"/>
        <dbReference type="Rhea" id="RHEA-COMP:10000"/>
        <dbReference type="Rhea" id="RHEA-COMP:10001"/>
        <dbReference type="ChEBI" id="CHEBI:15378"/>
        <dbReference type="ChEBI" id="CHEBI:33737"/>
        <dbReference type="ChEBI" id="CHEBI:33738"/>
        <dbReference type="ChEBI" id="CHEBI:57540"/>
        <dbReference type="ChEBI" id="CHEBI:57945"/>
        <dbReference type="EC" id="1.18.1.3"/>
    </reaction>
</comment>
<comment type="cofactor">
    <cofactor>
        <name>FAD</name>
        <dbReference type="ChEBI" id="CHEBI:57692"/>
    </cofactor>
</comment>
<comment type="pathway">
    <text>Xenobiotic degradation; biphenyl degradation.</text>
</comment>
<comment type="subunit">
    <text>This dioxygenase system consists of four proteins: the two subunits of the hydroxylase component (BphA and BphE), a ferredoxin (BphF) and a ferredoxin reductase (BphG).</text>
</comment>
<comment type="similarity">
    <text evidence="2">Belongs to the bacterial ring-hydroxylating dioxygenase ferredoxin reductase family.</text>
</comment>
<evidence type="ECO:0000255" key="1"/>
<evidence type="ECO:0000305" key="2"/>
<feature type="chain" id="PRO_0000167653" description="Biphenyl dioxygenase system ferredoxin--NAD(+) reductase component">
    <location>
        <begin position="1"/>
        <end position="408"/>
    </location>
</feature>
<feature type="binding site" evidence="1">
    <location>
        <begin position="4"/>
        <end position="35"/>
    </location>
    <ligand>
        <name>FAD</name>
        <dbReference type="ChEBI" id="CHEBI:57692"/>
    </ligand>
</feature>
<feature type="binding site" evidence="1">
    <location>
        <begin position="145"/>
        <end position="173"/>
    </location>
    <ligand>
        <name>NAD(+)</name>
        <dbReference type="ChEBI" id="CHEBI:57540"/>
    </ligand>
</feature>
<organism>
    <name type="scientific">Paraburkholderia xenovorans (strain LB400)</name>
    <dbReference type="NCBI Taxonomy" id="266265"/>
    <lineage>
        <taxon>Bacteria</taxon>
        <taxon>Pseudomonadati</taxon>
        <taxon>Pseudomonadota</taxon>
        <taxon>Betaproteobacteria</taxon>
        <taxon>Burkholderiales</taxon>
        <taxon>Burkholderiaceae</taxon>
        <taxon>Paraburkholderia</taxon>
    </lineage>
</organism>
<keyword id="KW-0058">Aromatic hydrocarbons catabolism</keyword>
<keyword id="KW-0274">FAD</keyword>
<keyword id="KW-0285">Flavoprotein</keyword>
<keyword id="KW-0520">NAD</keyword>
<keyword id="KW-0560">Oxidoreductase</keyword>
<keyword id="KW-1185">Reference proteome</keyword>
<reference key="1">
    <citation type="journal article" date="1992" name="J. Bacteriol.">
        <title>Nucleotide sequencing and transcriptional mapping of the genes encoding biphenyl dioxygenase, a multicomponent polychlorinated-biphenyl-degrading enzyme in Pseudomonas strain LB400.</title>
        <authorList>
            <person name="Erickson B.D."/>
            <person name="Mondello F.J."/>
        </authorList>
    </citation>
    <scope>NUCLEOTIDE SEQUENCE [GENOMIC DNA]</scope>
</reference>
<reference key="2">
    <citation type="submission" date="1995-07" db="EMBL/GenBank/DDBJ databases">
        <authorList>
            <person name="Erickson B.D."/>
            <person name="Mondello F.J."/>
        </authorList>
    </citation>
    <scope>SEQUENCE REVISION</scope>
</reference>
<reference key="3">
    <citation type="journal article" date="2006" name="Proc. Natl. Acad. Sci. U.S.A.">
        <title>Burkholderia xenovorans LB400 harbors a multi-replicon, 9.73-Mbp genome shaped for versatility.</title>
        <authorList>
            <person name="Chain P.S.G."/>
            <person name="Denef V.J."/>
            <person name="Konstantinidis K.T."/>
            <person name="Vergez L.M."/>
            <person name="Agullo L."/>
            <person name="Reyes V.L."/>
            <person name="Hauser L."/>
            <person name="Cordova M."/>
            <person name="Gomez L."/>
            <person name="Gonzalez M."/>
            <person name="Land M."/>
            <person name="Lao V."/>
            <person name="Larimer F."/>
            <person name="LiPuma J.J."/>
            <person name="Mahenthiralingam E."/>
            <person name="Malfatti S.A."/>
            <person name="Marx C.J."/>
            <person name="Parnell J.J."/>
            <person name="Ramette A."/>
            <person name="Richardson P."/>
            <person name="Seeger M."/>
            <person name="Smith D."/>
            <person name="Spilker T."/>
            <person name="Sul W.J."/>
            <person name="Tsoi T.V."/>
            <person name="Ulrich L.E."/>
            <person name="Zhulin I.B."/>
            <person name="Tiedje J.M."/>
        </authorList>
    </citation>
    <scope>NUCLEOTIDE SEQUENCE [LARGE SCALE GENOMIC DNA]</scope>
    <source>
        <strain>LB400</strain>
    </source>
</reference>
<gene>
    <name type="primary">bphG</name>
    <name type="ordered locus">Bxeno_C1127</name>
    <name type="ORF">Bxe_C1193</name>
</gene>
<dbReference type="EC" id="1.18.1.3"/>
<dbReference type="EMBL" id="M86348">
    <property type="protein sequence ID" value="AAB63429.1"/>
    <property type="molecule type" value="Genomic_DNA"/>
</dbReference>
<dbReference type="EMBL" id="CP000272">
    <property type="protein sequence ID" value="ABE37055.1"/>
    <property type="molecule type" value="Genomic_DNA"/>
</dbReference>
<dbReference type="PIR" id="F41858">
    <property type="entry name" value="F41858"/>
</dbReference>
<dbReference type="RefSeq" id="WP_003450997.1">
    <property type="nucleotide sequence ID" value="NZ_CP008761.1"/>
</dbReference>
<dbReference type="SMR" id="P37337"/>
<dbReference type="STRING" id="266265.Bxe_C1193"/>
<dbReference type="KEGG" id="bxb:DR64_8612"/>
<dbReference type="KEGG" id="bxe:Bxe_C1193"/>
<dbReference type="eggNOG" id="COG1251">
    <property type="taxonomic scope" value="Bacteria"/>
</dbReference>
<dbReference type="OrthoDB" id="9769238at2"/>
<dbReference type="UniPathway" id="UPA00155"/>
<dbReference type="Proteomes" id="UP000001817">
    <property type="component" value="Chromosome 3"/>
</dbReference>
<dbReference type="GO" id="GO:0005737">
    <property type="term" value="C:cytoplasm"/>
    <property type="evidence" value="ECO:0007669"/>
    <property type="project" value="TreeGrafter"/>
</dbReference>
<dbReference type="GO" id="GO:0008860">
    <property type="term" value="F:ferredoxin-NAD+ reductase activity"/>
    <property type="evidence" value="ECO:0007669"/>
    <property type="project" value="UniProtKB-EC"/>
</dbReference>
<dbReference type="GO" id="GO:0016651">
    <property type="term" value="F:oxidoreductase activity, acting on NAD(P)H"/>
    <property type="evidence" value="ECO:0007669"/>
    <property type="project" value="TreeGrafter"/>
</dbReference>
<dbReference type="GO" id="GO:0009056">
    <property type="term" value="P:catabolic process"/>
    <property type="evidence" value="ECO:0007669"/>
    <property type="project" value="UniProtKB-KW"/>
</dbReference>
<dbReference type="Gene3D" id="3.30.390.30">
    <property type="match status" value="1"/>
</dbReference>
<dbReference type="Gene3D" id="3.50.50.60">
    <property type="entry name" value="FAD/NAD(P)-binding domain"/>
    <property type="match status" value="2"/>
</dbReference>
<dbReference type="InterPro" id="IPR050446">
    <property type="entry name" value="FAD-oxidoreductase/Apoptosis"/>
</dbReference>
<dbReference type="InterPro" id="IPR036188">
    <property type="entry name" value="FAD/NAD-bd_sf"/>
</dbReference>
<dbReference type="InterPro" id="IPR023753">
    <property type="entry name" value="FAD/NAD-binding_dom"/>
</dbReference>
<dbReference type="InterPro" id="IPR016156">
    <property type="entry name" value="FAD/NAD-linked_Rdtase_dimer_sf"/>
</dbReference>
<dbReference type="InterPro" id="IPR028202">
    <property type="entry name" value="Reductase_C"/>
</dbReference>
<dbReference type="PANTHER" id="PTHR43557">
    <property type="entry name" value="APOPTOSIS-INDUCING FACTOR 1"/>
    <property type="match status" value="1"/>
</dbReference>
<dbReference type="PANTHER" id="PTHR43557:SF2">
    <property type="entry name" value="RIESKE DOMAIN-CONTAINING PROTEIN-RELATED"/>
    <property type="match status" value="1"/>
</dbReference>
<dbReference type="Pfam" id="PF07992">
    <property type="entry name" value="Pyr_redox_2"/>
    <property type="match status" value="1"/>
</dbReference>
<dbReference type="Pfam" id="PF14759">
    <property type="entry name" value="Reductase_C"/>
    <property type="match status" value="1"/>
</dbReference>
<dbReference type="PRINTS" id="PR00368">
    <property type="entry name" value="FADPNR"/>
</dbReference>
<dbReference type="PRINTS" id="PR00411">
    <property type="entry name" value="PNDRDTASEI"/>
</dbReference>
<dbReference type="SUPFAM" id="SSF51905">
    <property type="entry name" value="FAD/NAD(P)-binding domain"/>
    <property type="match status" value="1"/>
</dbReference>
<dbReference type="SUPFAM" id="SSF55424">
    <property type="entry name" value="FAD/NAD-linked reductases, dimerisation (C-terminal) domain"/>
    <property type="match status" value="1"/>
</dbReference>
<protein>
    <recommendedName>
        <fullName>Biphenyl dioxygenase system ferredoxin--NAD(+) reductase component</fullName>
        <ecNumber>1.18.1.3</ecNumber>
    </recommendedName>
</protein>
<proteinExistence type="inferred from homology"/>
<name>BPHG_PARXL</name>
<sequence>MIDTIAIIGAGLAGSTAARALRAQGYEGRIHLLGDESHQAYDRTTLSKTVLAGEQPEPPAILDSAWYASAHVDVQLGRRVSCLDLANRQIQFESGAPLAYDRLLLATGARARRMAIRGGDLAGIHTLRDLADSQALRQALQPGQSLVIVGGGLIGCEVATTARKLSVHVTILEAGDELLVRVLGHRTGAWCRAELERMGVRVERNAQAARFEGQGQVRAVICADGRRVPADVVLVSIGAEPADELARAAGIACARGVLVDATGATSCPEVFAAGDVAAWPLRQGGQRSLETYLNSQMEAEIAASAMLSQPVPAPQVPTSWTEIAGHRIQMIGDAEGPGEIVVRGDAQSGQPIVLLRLLDGCVEAATAINATREFSVATRLVGTRVSVSAEQLQDVGSNLRDLLKAKPN</sequence>
<accession>P37337</accession>
<accession>Q13FT4</accession>